<sequence length="501" mass="55049">MRPSAPTGLLQQPKPFFMIFFVELWERFGYYGVQGILAVFFVQQLGFSQEQSFITFGAFSALVYGLISVGGYVGDHVLGTKRTMVLGAIVLVIGYFMTGMSIYNPDLIFYALGTIAVGNCLFKANPASLLAKCYERGDPRLDGAFTLFYMSINIGSLISLSLAPVIADHYGYTVTYNLCGVGLVIALLTFFACRHMVRDIGSEPDHLPLDYGKLLLVLLGSVALVFFCAWLMHHVVIANMVLMTVTLAVVIFFFREAFKLDAVARNKMYVAFVLMLEAVVFYVLYAQMPTSLNFFAINNMHHEMLGMSVNPISFQALNPFWVVVGSPVLAMIYTRLGSKGRDLTMPLKFTLGMLFCSLGFLTAAASGIWFADAQGLTSPWFMVLIYLFQSLGELMISALGLAMVAALVPQRLMGFILGMWFLTQAMASLLGGYVATFTAVPQGVTDPLQTLPIYTDVFGKIGLVTLLVAVVMALMVPWLNRMMHAGQGEEGEDLLSQQAKA</sequence>
<dbReference type="EMBL" id="CP000462">
    <property type="protein sequence ID" value="ABK36654.1"/>
    <property type="molecule type" value="Genomic_DNA"/>
</dbReference>
<dbReference type="RefSeq" id="WP_011706918.1">
    <property type="nucleotide sequence ID" value="NC_008570.1"/>
</dbReference>
<dbReference type="RefSeq" id="YP_857632.1">
    <property type="nucleotide sequence ID" value="NC_008570.1"/>
</dbReference>
<dbReference type="SMR" id="A0KMY1"/>
<dbReference type="STRING" id="380703.AHA_3132"/>
<dbReference type="EnsemblBacteria" id="ABK36654">
    <property type="protein sequence ID" value="ABK36654"/>
    <property type="gene ID" value="AHA_3132"/>
</dbReference>
<dbReference type="GeneID" id="4489424"/>
<dbReference type="KEGG" id="aha:AHA_3132"/>
<dbReference type="PATRIC" id="fig|380703.7.peg.3131"/>
<dbReference type="eggNOG" id="COG3104">
    <property type="taxonomic scope" value="Bacteria"/>
</dbReference>
<dbReference type="HOGENOM" id="CLU_004790_0_0_6"/>
<dbReference type="OrthoDB" id="9772725at2"/>
<dbReference type="Proteomes" id="UP000000756">
    <property type="component" value="Chromosome"/>
</dbReference>
<dbReference type="GO" id="GO:0005886">
    <property type="term" value="C:plasma membrane"/>
    <property type="evidence" value="ECO:0007669"/>
    <property type="project" value="UniProtKB-SubCell"/>
</dbReference>
<dbReference type="GO" id="GO:0071916">
    <property type="term" value="F:dipeptide transmembrane transporter activity"/>
    <property type="evidence" value="ECO:0007669"/>
    <property type="project" value="UniProtKB-UniRule"/>
</dbReference>
<dbReference type="GO" id="GO:0015333">
    <property type="term" value="F:peptide:proton symporter activity"/>
    <property type="evidence" value="ECO:0007669"/>
    <property type="project" value="UniProtKB-UniRule"/>
</dbReference>
<dbReference type="GO" id="GO:0042937">
    <property type="term" value="F:tripeptide transmembrane transporter activity"/>
    <property type="evidence" value="ECO:0007669"/>
    <property type="project" value="UniProtKB-UniRule"/>
</dbReference>
<dbReference type="GO" id="GO:0015031">
    <property type="term" value="P:protein transport"/>
    <property type="evidence" value="ECO:0007669"/>
    <property type="project" value="UniProtKB-KW"/>
</dbReference>
<dbReference type="CDD" id="cd17346">
    <property type="entry name" value="MFS_DtpA_like"/>
    <property type="match status" value="1"/>
</dbReference>
<dbReference type="FunFam" id="1.20.1250.20:FF:000017">
    <property type="entry name" value="Dipeptide and tripeptide permease A"/>
    <property type="match status" value="1"/>
</dbReference>
<dbReference type="Gene3D" id="1.20.1250.20">
    <property type="entry name" value="MFS general substrate transporter like domains"/>
    <property type="match status" value="1"/>
</dbReference>
<dbReference type="HAMAP" id="MF_01879">
    <property type="entry name" value="PTR2_DtpB_subfam"/>
    <property type="match status" value="1"/>
</dbReference>
<dbReference type="InterPro" id="IPR023778">
    <property type="entry name" value="AA/pep_transptr_DtpB"/>
</dbReference>
<dbReference type="InterPro" id="IPR005279">
    <property type="entry name" value="Dipep/tripep_permease"/>
</dbReference>
<dbReference type="InterPro" id="IPR036259">
    <property type="entry name" value="MFS_trans_sf"/>
</dbReference>
<dbReference type="InterPro" id="IPR050171">
    <property type="entry name" value="MFS_Transporters"/>
</dbReference>
<dbReference type="InterPro" id="IPR000109">
    <property type="entry name" value="POT_fam"/>
</dbReference>
<dbReference type="InterPro" id="IPR018456">
    <property type="entry name" value="PTR2_symporter_CS"/>
</dbReference>
<dbReference type="NCBIfam" id="NF007575">
    <property type="entry name" value="PRK10207.1"/>
    <property type="match status" value="1"/>
</dbReference>
<dbReference type="NCBIfam" id="TIGR00924">
    <property type="entry name" value="yjdL_sub1_fam"/>
    <property type="match status" value="1"/>
</dbReference>
<dbReference type="PANTHER" id="PTHR23517:SF15">
    <property type="entry name" value="PROTON-DEPENDENT OLIGOPEPTIDE FAMILY TRANSPORT PROTEIN"/>
    <property type="match status" value="1"/>
</dbReference>
<dbReference type="PANTHER" id="PTHR23517">
    <property type="entry name" value="RESISTANCE PROTEIN MDTM, PUTATIVE-RELATED-RELATED"/>
    <property type="match status" value="1"/>
</dbReference>
<dbReference type="Pfam" id="PF00854">
    <property type="entry name" value="PTR2"/>
    <property type="match status" value="1"/>
</dbReference>
<dbReference type="SUPFAM" id="SSF103473">
    <property type="entry name" value="MFS general substrate transporter"/>
    <property type="match status" value="1"/>
</dbReference>
<dbReference type="PROSITE" id="PS01023">
    <property type="entry name" value="PTR2_2"/>
    <property type="match status" value="1"/>
</dbReference>
<organism>
    <name type="scientific">Aeromonas hydrophila subsp. hydrophila (strain ATCC 7966 / DSM 30187 / BCRC 13018 / CCUG 14551 / JCM 1027 / KCTC 2358 / NCIMB 9240 / NCTC 8049)</name>
    <dbReference type="NCBI Taxonomy" id="380703"/>
    <lineage>
        <taxon>Bacteria</taxon>
        <taxon>Pseudomonadati</taxon>
        <taxon>Pseudomonadota</taxon>
        <taxon>Gammaproteobacteria</taxon>
        <taxon>Aeromonadales</taxon>
        <taxon>Aeromonadaceae</taxon>
        <taxon>Aeromonas</taxon>
    </lineage>
</organism>
<gene>
    <name evidence="1" type="primary">dtpB</name>
    <name type="ordered locus">AHA_3132</name>
</gene>
<proteinExistence type="inferred from homology"/>
<comment type="function">
    <text evidence="1">Proton-dependent permease that transports di- and tripeptides.</text>
</comment>
<comment type="subcellular location">
    <subcellularLocation>
        <location evidence="1">Cell inner membrane</location>
        <topology evidence="1">Multi-pass membrane protein</topology>
    </subcellularLocation>
</comment>
<comment type="similarity">
    <text evidence="1">Belongs to the major facilitator superfamily. Proton-dependent oligopeptide transporter (POT/PTR) (TC 2.A.17) family. DtpB subfamily.</text>
</comment>
<protein>
    <recommendedName>
        <fullName evidence="1">Dipeptide and tripeptide permease B</fullName>
    </recommendedName>
</protein>
<name>DTPB_AERHH</name>
<keyword id="KW-0997">Cell inner membrane</keyword>
<keyword id="KW-1003">Cell membrane</keyword>
<keyword id="KW-0472">Membrane</keyword>
<keyword id="KW-0571">Peptide transport</keyword>
<keyword id="KW-0653">Protein transport</keyword>
<keyword id="KW-1185">Reference proteome</keyword>
<keyword id="KW-0812">Transmembrane</keyword>
<keyword id="KW-1133">Transmembrane helix</keyword>
<keyword id="KW-0813">Transport</keyword>
<evidence type="ECO:0000255" key="1">
    <source>
        <dbReference type="HAMAP-Rule" id="MF_01879"/>
    </source>
</evidence>
<reference key="1">
    <citation type="journal article" date="2006" name="J. Bacteriol.">
        <title>Genome sequence of Aeromonas hydrophila ATCC 7966T: jack of all trades.</title>
        <authorList>
            <person name="Seshadri R."/>
            <person name="Joseph S.W."/>
            <person name="Chopra A.K."/>
            <person name="Sha J."/>
            <person name="Shaw J."/>
            <person name="Graf J."/>
            <person name="Haft D.H."/>
            <person name="Wu M."/>
            <person name="Ren Q."/>
            <person name="Rosovitz M.J."/>
            <person name="Madupu R."/>
            <person name="Tallon L."/>
            <person name="Kim M."/>
            <person name="Jin S."/>
            <person name="Vuong H."/>
            <person name="Stine O.C."/>
            <person name="Ali A."/>
            <person name="Horneman A.J."/>
            <person name="Heidelberg J.F."/>
        </authorList>
    </citation>
    <scope>NUCLEOTIDE SEQUENCE [LARGE SCALE GENOMIC DNA]</scope>
    <source>
        <strain>ATCC 7966 / DSM 30187 / BCRC 13018 / CCUG 14551 / JCM 1027 / KCTC 2358 / NCIMB 9240 / NCTC 8049</strain>
    </source>
</reference>
<feature type="chain" id="PRO_0000395183" description="Dipeptide and tripeptide permease B">
    <location>
        <begin position="1"/>
        <end position="501"/>
    </location>
</feature>
<feature type="topological domain" description="Cytoplasmic" evidence="1">
    <location>
        <begin position="1"/>
        <end position="27"/>
    </location>
</feature>
<feature type="transmembrane region" description="Helical" evidence="1">
    <location>
        <begin position="28"/>
        <end position="48"/>
    </location>
</feature>
<feature type="topological domain" description="Periplasmic" evidence="1">
    <location>
        <begin position="49"/>
        <end position="52"/>
    </location>
</feature>
<feature type="transmembrane region" description="Helical" evidence="1">
    <location>
        <begin position="53"/>
        <end position="73"/>
    </location>
</feature>
<feature type="topological domain" description="Cytoplasmic" evidence="1">
    <location>
        <begin position="74"/>
        <end position="82"/>
    </location>
</feature>
<feature type="transmembrane region" description="Helical" evidence="1">
    <location>
        <begin position="83"/>
        <end position="103"/>
    </location>
</feature>
<feature type="topological domain" description="Periplasmic" evidence="1">
    <location>
        <begin position="104"/>
        <end position="106"/>
    </location>
</feature>
<feature type="transmembrane region" description="Helical" evidence="1">
    <location>
        <begin position="107"/>
        <end position="127"/>
    </location>
</feature>
<feature type="topological domain" description="Cytoplasmic" evidence="1">
    <location>
        <begin position="128"/>
        <end position="146"/>
    </location>
</feature>
<feature type="transmembrane region" description="Helical" evidence="1">
    <location>
        <begin position="147"/>
        <end position="167"/>
    </location>
</feature>
<feature type="topological domain" description="Periplasmic" evidence="1">
    <location>
        <begin position="168"/>
        <end position="172"/>
    </location>
</feature>
<feature type="transmembrane region" description="Helical" evidence="1">
    <location>
        <begin position="173"/>
        <end position="193"/>
    </location>
</feature>
<feature type="topological domain" description="Cytoplasmic" evidence="1">
    <location>
        <begin position="194"/>
        <end position="211"/>
    </location>
</feature>
<feature type="transmembrane region" description="Helical" evidence="1">
    <location>
        <begin position="212"/>
        <end position="232"/>
    </location>
</feature>
<feature type="topological domain" description="Periplasmic" evidence="1">
    <location>
        <position position="233"/>
    </location>
</feature>
<feature type="transmembrane region" description="Helical" evidence="1">
    <location>
        <begin position="234"/>
        <end position="254"/>
    </location>
</feature>
<feature type="topological domain" description="Cytoplasmic" evidence="1">
    <location>
        <begin position="255"/>
        <end position="267"/>
    </location>
</feature>
<feature type="transmembrane region" description="Helical" evidence="1">
    <location>
        <begin position="268"/>
        <end position="288"/>
    </location>
</feature>
<feature type="topological domain" description="Periplasmic" evidence="1">
    <location>
        <begin position="289"/>
        <end position="311"/>
    </location>
</feature>
<feature type="transmembrane region" description="Helical" evidence="1">
    <location>
        <begin position="312"/>
        <end position="332"/>
    </location>
</feature>
<feature type="topological domain" description="Cytoplasmic" evidence="1">
    <location>
        <begin position="333"/>
        <end position="350"/>
    </location>
</feature>
<feature type="transmembrane region" description="Helical" evidence="1">
    <location>
        <begin position="351"/>
        <end position="371"/>
    </location>
</feature>
<feature type="topological domain" description="Periplasmic" evidence="1">
    <location>
        <begin position="372"/>
        <end position="380"/>
    </location>
</feature>
<feature type="transmembrane region" description="Helical" evidence="1">
    <location>
        <begin position="381"/>
        <end position="401"/>
    </location>
</feature>
<feature type="topological domain" description="Cytoplasmic" evidence="1">
    <location>
        <begin position="402"/>
        <end position="411"/>
    </location>
</feature>
<feature type="transmembrane region" description="Helical" evidence="1">
    <location>
        <begin position="412"/>
        <end position="432"/>
    </location>
</feature>
<feature type="topological domain" description="Periplasmic" evidence="1">
    <location>
        <begin position="433"/>
        <end position="456"/>
    </location>
</feature>
<feature type="transmembrane region" description="Helical" evidence="1">
    <location>
        <begin position="457"/>
        <end position="477"/>
    </location>
</feature>
<feature type="topological domain" description="Cytoplasmic" evidence="1">
    <location>
        <begin position="478"/>
        <end position="501"/>
    </location>
</feature>
<accession>A0KMY1</accession>